<keyword id="KW-0963">Cytoplasm</keyword>
<keyword id="KW-0206">Cytoskeleton</keyword>
<keyword id="KW-0493">Microtubule</keyword>
<keyword id="KW-0539">Nucleus</keyword>
<keyword id="KW-1185">Reference proteome</keyword>
<protein>
    <recommendedName>
        <fullName>Gamma-tubulin complex component 3</fullName>
        <shortName>AtGCP3</shortName>
        <shortName>GCP-3</shortName>
    </recommendedName>
    <alternativeName>
        <fullName>Spindle pole body component 98</fullName>
        <shortName>AtSPC98</shortName>
    </alternativeName>
</protein>
<accession>Q9FG37</accession>
<name>GACP3_ARATH</name>
<feature type="chain" id="PRO_0000428970" description="Gamma-tubulin complex component 3">
    <location>
        <begin position="1"/>
        <end position="838"/>
    </location>
</feature>
<feature type="region of interest" description="Mediates interactions with GIP1 and GIP2">
    <location>
        <begin position="1"/>
        <end position="199"/>
    </location>
</feature>
<feature type="region of interest" description="Triggers nucleus envelope localization">
    <location>
        <begin position="200"/>
        <end position="256"/>
    </location>
</feature>
<dbReference type="EMBL" id="AP002032">
    <property type="protein sequence ID" value="BAB09802.1"/>
    <property type="molecule type" value="Genomic_DNA"/>
</dbReference>
<dbReference type="EMBL" id="CP002688">
    <property type="protein sequence ID" value="AED91049.1"/>
    <property type="molecule type" value="Genomic_DNA"/>
</dbReference>
<dbReference type="EMBL" id="AY099727">
    <property type="protein sequence ID" value="AAM20578.1"/>
    <property type="molecule type" value="mRNA"/>
</dbReference>
<dbReference type="EMBL" id="BT010545">
    <property type="protein sequence ID" value="AAQ65168.1"/>
    <property type="molecule type" value="mRNA"/>
</dbReference>
<dbReference type="RefSeq" id="NP_196286.1">
    <property type="nucleotide sequence ID" value="NM_120751.4"/>
</dbReference>
<dbReference type="SMR" id="Q9FG37"/>
<dbReference type="BioGRID" id="15836">
    <property type="interactions" value="6"/>
</dbReference>
<dbReference type="FunCoup" id="Q9FG37">
    <property type="interactions" value="4303"/>
</dbReference>
<dbReference type="IntAct" id="Q9FG37">
    <property type="interactions" value="1"/>
</dbReference>
<dbReference type="STRING" id="3702.Q9FG37"/>
<dbReference type="PaxDb" id="3702-AT5G06680.1"/>
<dbReference type="ProteomicsDB" id="230052"/>
<dbReference type="EnsemblPlants" id="AT5G06680.1">
    <property type="protein sequence ID" value="AT5G06680.1"/>
    <property type="gene ID" value="AT5G06680"/>
</dbReference>
<dbReference type="GeneID" id="830557"/>
<dbReference type="Gramene" id="AT5G06680.1">
    <property type="protein sequence ID" value="AT5G06680.1"/>
    <property type="gene ID" value="AT5G06680"/>
</dbReference>
<dbReference type="KEGG" id="ath:AT5G06680"/>
<dbReference type="Araport" id="AT5G06680"/>
<dbReference type="TAIR" id="AT5G06680">
    <property type="gene designation" value="SPC98"/>
</dbReference>
<dbReference type="eggNOG" id="KOG2000">
    <property type="taxonomic scope" value="Eukaryota"/>
</dbReference>
<dbReference type="HOGENOM" id="CLU_003736_2_0_1"/>
<dbReference type="InParanoid" id="Q9FG37"/>
<dbReference type="OMA" id="MRMMSVC"/>
<dbReference type="OrthoDB" id="5860513at2759"/>
<dbReference type="PhylomeDB" id="Q9FG37"/>
<dbReference type="CD-CODE" id="33FCD62D">
    <property type="entry name" value="Centrosome"/>
</dbReference>
<dbReference type="PRO" id="PR:Q9FG37"/>
<dbReference type="Proteomes" id="UP000006548">
    <property type="component" value="Chromosome 5"/>
</dbReference>
<dbReference type="ExpressionAtlas" id="Q9FG37">
    <property type="expression patterns" value="baseline and differential"/>
</dbReference>
<dbReference type="GO" id="GO:0005938">
    <property type="term" value="C:cell cortex"/>
    <property type="evidence" value="ECO:0000314"/>
    <property type="project" value="UniProtKB"/>
</dbReference>
<dbReference type="GO" id="GO:0055028">
    <property type="term" value="C:cortical microtubule"/>
    <property type="evidence" value="ECO:0000314"/>
    <property type="project" value="UniProtKB"/>
</dbReference>
<dbReference type="GO" id="GO:0005737">
    <property type="term" value="C:cytoplasm"/>
    <property type="evidence" value="ECO:0000314"/>
    <property type="project" value="UniProtKB"/>
</dbReference>
<dbReference type="GO" id="GO:0009898">
    <property type="term" value="C:cytoplasmic side of plasma membrane"/>
    <property type="evidence" value="ECO:0000314"/>
    <property type="project" value="TAIR"/>
</dbReference>
<dbReference type="GO" id="GO:0000930">
    <property type="term" value="C:gamma-tubulin complex"/>
    <property type="evidence" value="ECO:0000314"/>
    <property type="project" value="TAIR"/>
</dbReference>
<dbReference type="GO" id="GO:0005874">
    <property type="term" value="C:microtubule"/>
    <property type="evidence" value="ECO:0000314"/>
    <property type="project" value="UniProtKB"/>
</dbReference>
<dbReference type="GO" id="GO:0005635">
    <property type="term" value="C:nuclear envelope"/>
    <property type="evidence" value="ECO:0000314"/>
    <property type="project" value="TAIR"/>
</dbReference>
<dbReference type="GO" id="GO:0005819">
    <property type="term" value="C:spindle"/>
    <property type="evidence" value="ECO:0000314"/>
    <property type="project" value="UniProtKB"/>
</dbReference>
<dbReference type="GO" id="GO:0000922">
    <property type="term" value="C:spindle pole"/>
    <property type="evidence" value="ECO:0007669"/>
    <property type="project" value="InterPro"/>
</dbReference>
<dbReference type="GO" id="GO:0043015">
    <property type="term" value="F:gamma-tubulin binding"/>
    <property type="evidence" value="ECO:0007669"/>
    <property type="project" value="InterPro"/>
</dbReference>
<dbReference type="GO" id="GO:0015631">
    <property type="term" value="F:tubulin binding"/>
    <property type="evidence" value="ECO:0000250"/>
    <property type="project" value="TAIR"/>
</dbReference>
<dbReference type="GO" id="GO:0007020">
    <property type="term" value="P:microtubule nucleation"/>
    <property type="evidence" value="ECO:0000304"/>
    <property type="project" value="TAIR"/>
</dbReference>
<dbReference type="GO" id="GO:0090063">
    <property type="term" value="P:positive regulation of microtubule nucleation"/>
    <property type="evidence" value="ECO:0000314"/>
    <property type="project" value="UniProtKB"/>
</dbReference>
<dbReference type="GO" id="GO:0009624">
    <property type="term" value="P:response to nematode"/>
    <property type="evidence" value="ECO:0000314"/>
    <property type="project" value="UniProtKB"/>
</dbReference>
<dbReference type="Gene3D" id="1.20.120.1900">
    <property type="entry name" value="Gamma-tubulin complex, C-terminal domain"/>
    <property type="match status" value="1"/>
</dbReference>
<dbReference type="InterPro" id="IPR007259">
    <property type="entry name" value="GCP"/>
</dbReference>
<dbReference type="InterPro" id="IPR040457">
    <property type="entry name" value="GCP_C"/>
</dbReference>
<dbReference type="InterPro" id="IPR042241">
    <property type="entry name" value="GCP_C_sf"/>
</dbReference>
<dbReference type="InterPro" id="IPR041470">
    <property type="entry name" value="GCP_N"/>
</dbReference>
<dbReference type="PANTHER" id="PTHR19302">
    <property type="entry name" value="GAMMA TUBULIN COMPLEX PROTEIN"/>
    <property type="match status" value="1"/>
</dbReference>
<dbReference type="PANTHER" id="PTHR19302:SF14">
    <property type="entry name" value="GAMMA-TUBULIN COMPLEX COMPONENT 3"/>
    <property type="match status" value="1"/>
</dbReference>
<dbReference type="Pfam" id="PF04130">
    <property type="entry name" value="GCP_C_terminal"/>
    <property type="match status" value="1"/>
</dbReference>
<dbReference type="Pfam" id="PF17681">
    <property type="entry name" value="GCP_N_terminal"/>
    <property type="match status" value="1"/>
</dbReference>
<gene>
    <name type="primary">GCP3</name>
    <name type="synonym">SPC98</name>
    <name type="ordered locus">At5g06680</name>
    <name type="ORF">MPH15.2</name>
</gene>
<comment type="function">
    <text>Gamma-tubulin complex is necessary for microtubule nucleation at the microtubule organizing centers (MTOCs). Required for the positioning of the gamma-tubulin-containing complex on pre-existing microtubules and for the proper organization of cortical arrays.</text>
</comment>
<comment type="function">
    <text>Gamma-tubulin complex is essential for the control of microtubular network remodeling in the course of initiation and development of giant-feeding cells, and for the successful reproduction of nematodes (e.g. Meloidogyne spp.) in their plant hosts.</text>
</comment>
<comment type="subunit">
    <text evidence="2 3 4 6 7">Part of the gamma-tubulin complex. Gamma-tubulin complex is composed of gamma-tubulin and GCP proteins. Interacts directly with GCP2, GIP1 and GIP2.</text>
</comment>
<comment type="subcellular location">
    <subcellularLocation>
        <location evidence="1">Cytoplasm</location>
        <location evidence="1">Cytoskeleton</location>
        <location evidence="1">Microtubule organizing center</location>
    </subcellularLocation>
    <subcellularLocation>
        <location>Nucleus envelope</location>
    </subcellularLocation>
    <subcellularLocation>
        <location>Cytoplasm</location>
    </subcellularLocation>
    <subcellularLocation>
        <location>Cytoplasm</location>
        <location>Cell cortex</location>
    </subcellularLocation>
    <subcellularLocation>
        <location>Cytoplasm</location>
        <location>Cytoskeleton</location>
        <location>Spindle</location>
    </subcellularLocation>
    <text>Associated to motile complexes in the cytosol that transiently stabilized at fixed locations in the cell cortex (e.g. along the outer periclinal edge of newly formed crosswalls) from which microtubules grow away prior to microtubules nucleation. Colocalizes with gamma-tubulin at the nuclear surface where microtubules are nucleated. Localizes to both cortical cytoplasm and mitotic microtubule arrays of the nematode feeding giant cells.</text>
</comment>
<comment type="induction">
    <text evidence="5">Up-regulated in galls upon nematode infection.</text>
</comment>
<comment type="similarity">
    <text evidence="8">Belongs to the TUBGCP family.</text>
</comment>
<organism>
    <name type="scientific">Arabidopsis thaliana</name>
    <name type="common">Mouse-ear cress</name>
    <dbReference type="NCBI Taxonomy" id="3702"/>
    <lineage>
        <taxon>Eukaryota</taxon>
        <taxon>Viridiplantae</taxon>
        <taxon>Streptophyta</taxon>
        <taxon>Embryophyta</taxon>
        <taxon>Tracheophyta</taxon>
        <taxon>Spermatophyta</taxon>
        <taxon>Magnoliopsida</taxon>
        <taxon>eudicotyledons</taxon>
        <taxon>Gunneridae</taxon>
        <taxon>Pentapetalae</taxon>
        <taxon>rosids</taxon>
        <taxon>malvids</taxon>
        <taxon>Brassicales</taxon>
        <taxon>Brassicaceae</taxon>
        <taxon>Camelineae</taxon>
        <taxon>Arabidopsis</taxon>
    </lineage>
</organism>
<sequence>MEDDDQQKAADLVQELVLRLVSQNPQTPNLDPNSPAFLKTLRYAFRILSSRLTPSVLPDATAIAESLKRRLATQGKSSDALAFADLYTKFASKTGPGSVNNKWALVYLLKIVSDDRKSAINGLDSSVLLPNLGIGDTGNGVLSRGEAKKKDWSNGVLLVSKDPENLRDIAFREYAILVKEENEVTEEVLVRDVLYASQGIDGKYVKFNSEIDGYAVQESVKVPRATRIMVRMLSELGWLFRKVKTFITESMDRFPAEDVGTVGQAFCAALQDELSDYYKLLAVLEAQAMNPIPLVSESASSNNYLSLRRLSVWFAEPMVKMRLMAVLVDKCKVLRGGAMAGAIHLHAQHGDPLVHDFMMSLLRCVCSPLFEMVRSWVLEGELEDTFGEFFVVGQPVKVDLLWREGYKLHPAMLPSFISPSLAQRILRTGKSINFLRVCCDDHGWADAASEAAAASGTTTRRGGLGYGETDALEHLVTEAAKRIDKHLLDVLYKRYKFKEHCLAIKRYLLLGQGDFVQYLMDIVGPKLSEPANNISSFELAGFLEAAIRASNAQYDDRDMLDRLRVKMMPHGSGDRGWDVFSLEYEARVPLDTVFTESVLSKYLRVFNFLWKLKRVEHALIGIWKTMKPNCITSNSFVKLQSSVKLQLLSALRRCQVLWNEMNHFVTNFQYYIMFEVLEVSWSNFSKEMEAAKDLDDLLAAHEKYLNAIVGKSLLGEQSQTIRESLFVLFELILRFRSHADRLYEGIHELQIRSKESGREKNKSQEPGSWISEGRKGLTQRAGEFLQSMSQDMDSIAKEYTSSLDGFLSLLPLQQSVDLKFLFFRLDFTEFYSRLHSKG</sequence>
<reference key="1">
    <citation type="submission" date="2000-05" db="EMBL/GenBank/DDBJ databases">
        <title>Structural analysis of Arabidopsis thaliana chromosome 5. XI.</title>
        <authorList>
            <person name="Kaneko T."/>
            <person name="Katoh T."/>
            <person name="Asamizu E."/>
            <person name="Sato S."/>
            <person name="Nakamura Y."/>
            <person name="Kotani H."/>
            <person name="Tabata S."/>
        </authorList>
    </citation>
    <scope>NUCLEOTIDE SEQUENCE [LARGE SCALE GENOMIC DNA]</scope>
    <source>
        <strain>cv. Columbia</strain>
    </source>
</reference>
<reference key="2">
    <citation type="journal article" date="2017" name="Plant J.">
        <title>Araport11: a complete reannotation of the Arabidopsis thaliana reference genome.</title>
        <authorList>
            <person name="Cheng C.Y."/>
            <person name="Krishnakumar V."/>
            <person name="Chan A.P."/>
            <person name="Thibaud-Nissen F."/>
            <person name="Schobel S."/>
            <person name="Town C.D."/>
        </authorList>
    </citation>
    <scope>GENOME REANNOTATION</scope>
    <source>
        <strain>cv. Columbia</strain>
    </source>
</reference>
<reference key="3">
    <citation type="journal article" date="2003" name="Science">
        <title>Empirical analysis of transcriptional activity in the Arabidopsis genome.</title>
        <authorList>
            <person name="Yamada K."/>
            <person name="Lim J."/>
            <person name="Dale J.M."/>
            <person name="Chen H."/>
            <person name="Shinn P."/>
            <person name="Palm C.J."/>
            <person name="Southwick A.M."/>
            <person name="Wu H.C."/>
            <person name="Kim C.J."/>
            <person name="Nguyen M."/>
            <person name="Pham P.K."/>
            <person name="Cheuk R.F."/>
            <person name="Karlin-Newmann G."/>
            <person name="Liu S.X."/>
            <person name="Lam B."/>
            <person name="Sakano H."/>
            <person name="Wu T."/>
            <person name="Yu G."/>
            <person name="Miranda M."/>
            <person name="Quach H.L."/>
            <person name="Tripp M."/>
            <person name="Chang C.H."/>
            <person name="Lee J.M."/>
            <person name="Toriumi M.J."/>
            <person name="Chan M.M."/>
            <person name="Tang C.C."/>
            <person name="Onodera C.S."/>
            <person name="Deng J.M."/>
            <person name="Akiyama K."/>
            <person name="Ansari Y."/>
            <person name="Arakawa T."/>
            <person name="Banh J."/>
            <person name="Banno F."/>
            <person name="Bowser L."/>
            <person name="Brooks S.Y."/>
            <person name="Carninci P."/>
            <person name="Chao Q."/>
            <person name="Choy N."/>
            <person name="Enju A."/>
            <person name="Goldsmith A.D."/>
            <person name="Gurjal M."/>
            <person name="Hansen N.F."/>
            <person name="Hayashizaki Y."/>
            <person name="Johnson-Hopson C."/>
            <person name="Hsuan V.W."/>
            <person name="Iida K."/>
            <person name="Karnes M."/>
            <person name="Khan S."/>
            <person name="Koesema E."/>
            <person name="Ishida J."/>
            <person name="Jiang P.X."/>
            <person name="Jones T."/>
            <person name="Kawai J."/>
            <person name="Kamiya A."/>
            <person name="Meyers C."/>
            <person name="Nakajima M."/>
            <person name="Narusaka M."/>
            <person name="Seki M."/>
            <person name="Sakurai T."/>
            <person name="Satou M."/>
            <person name="Tamse R."/>
            <person name="Vaysberg M."/>
            <person name="Wallender E.K."/>
            <person name="Wong C."/>
            <person name="Yamamura Y."/>
            <person name="Yuan S."/>
            <person name="Shinozaki K."/>
            <person name="Davis R.W."/>
            <person name="Theologis A."/>
            <person name="Ecker J.R."/>
        </authorList>
    </citation>
    <scope>NUCLEOTIDE SEQUENCE [LARGE SCALE MRNA]</scope>
    <source>
        <strain>cv. Columbia</strain>
    </source>
</reference>
<reference key="4">
    <citation type="journal article" date="2002" name="J. Cell Sci.">
        <title>The plant Spc98p homologue colocalizes with gamma-tubulin at microtubule nucleation sites and is required for microtubule nucleation.</title>
        <authorList>
            <person name="Erhardt M."/>
            <person name="Stoppin-Mellet V."/>
            <person name="Campagne S."/>
            <person name="Canaday J."/>
            <person name="Mutterer J."/>
            <person name="Fabian T."/>
            <person name="Sauter M."/>
            <person name="Muller T."/>
            <person name="Peter C."/>
            <person name="Lambert A.M."/>
            <person name="Schmit A.C."/>
        </authorList>
    </citation>
    <scope>FUNCTION</scope>
    <scope>SUBCELLULAR LOCATION</scope>
    <source>
        <strain>cv. Columbia</strain>
    </source>
</reference>
<reference key="5">
    <citation type="journal article" date="2007" name="Plant J.">
        <title>Arabidopsis GCP2 and GCP3 are part of a soluble gamma-tubulin complex and have nuclear envelope targeting domains.</title>
        <authorList>
            <person name="Seltzer V."/>
            <person name="Janski N."/>
            <person name="Canaday J."/>
            <person name="Herzog E."/>
            <person name="Erhardt M."/>
            <person name="Evrard J.L."/>
            <person name="Schmit A.C."/>
        </authorList>
    </citation>
    <scope>SUBCELLULAR LOCATION</scope>
    <scope>SUBUNIT</scope>
    <scope>NUCLEUS ENVELOPE LOCALIZATION REGION</scope>
</reference>
<reference key="6">
    <citation type="journal article" date="2009" name="J. Cell Sci.">
        <title>A mutation in the Arabidopsis gamma-tubulin-containing complex causes helical growth and abnormal microtubule branching.</title>
        <authorList>
            <person name="Nakamura M."/>
            <person name="Hashimoto T."/>
        </authorList>
    </citation>
    <scope>INTERACTION WITH GCP2</scope>
</reference>
<reference key="7">
    <citation type="journal article" date="2010" name="Nat. Cell Biol.">
        <title>Microtubule and katanin-dependent dynamics of microtubule nucleation complexes in the acentrosomal Arabidopsis cortical array.</title>
        <authorList>
            <person name="Nakamura M."/>
            <person name="Ehrhardt D.W."/>
            <person name="Hashimoto T."/>
        </authorList>
    </citation>
    <scope>FUNCTION</scope>
    <scope>SUBUNIT</scope>
    <scope>SUBCELLULAR LOCATION</scope>
</reference>
<reference key="8">
    <citation type="journal article" date="2011" name="PLoS ONE">
        <title>Cell edges accumulate gamma tubulin complex components and nucleate microtubules following cytokinesis in Arabidopsis thaliana.</title>
        <authorList>
            <person name="Ambrose C."/>
            <person name="Wasteneys G.O."/>
        </authorList>
    </citation>
    <scope>SUBCELLULAR LOCATION</scope>
    <source>
        <strain>cv. Columbia</strain>
    </source>
</reference>
<reference key="9">
    <citation type="journal article" date="2011" name="PLoS Pathog.">
        <title>Feeding cells induced by phytoparasitic nematodes require gamma-tubulin ring complex for microtubule reorganization.</title>
        <authorList>
            <person name="Banora M.Y."/>
            <person name="Rodiuc N."/>
            <person name="Baldacci-Cresp F."/>
            <person name="Smertenko A."/>
            <person name="Bleve-Zacheo T."/>
            <person name="Mellilo M.T."/>
            <person name="Karimi M."/>
            <person name="Hilson P."/>
            <person name="Evrard J.L."/>
            <person name="Favery B."/>
            <person name="Engler G."/>
            <person name="Abad P."/>
            <person name="de Almeida Engler J."/>
        </authorList>
    </citation>
    <scope>FUNCTION IN NEMATODE INFECTION</scope>
    <scope>SUBCELLULAR LOCATION</scope>
    <scope>INDUCTION BY NEMATODES</scope>
</reference>
<reference key="10">
    <citation type="journal article" date="2012" name="Plant Cell">
        <title>The GCP3-interacting proteins GIP1 and GIP2 are required for gamma-tubulin complex protein localization, spindle integrity, and chromosomal stability.</title>
        <authorList>
            <person name="Janski N."/>
            <person name="Masoud K."/>
            <person name="Batzenschlager M."/>
            <person name="Herzog E."/>
            <person name="Evrard J.L."/>
            <person name="Houlne G."/>
            <person name="Bourge M."/>
            <person name="Chaboute M.E."/>
            <person name="Schmit A.C."/>
        </authorList>
    </citation>
    <scope>INTERACTION WITH GIP1 AND GIP2</scope>
    <scope>SUBCELLULAR LOCATION</scope>
</reference>
<reference key="11">
    <citation type="journal article" date="2012" name="Plant J.">
        <title>Arabidopsis GCP3-interacting protein 1/MOZART 1 is an integral component of the gamma-tubulin-containing microtubule nucleating complex.</title>
        <authorList>
            <person name="Nakamura M."/>
            <person name="Yagi N."/>
            <person name="Kato T."/>
            <person name="Fujita S."/>
            <person name="Kawashima N."/>
            <person name="Ehrhardt D.W."/>
            <person name="Hashimoto T."/>
        </authorList>
    </citation>
    <scope>INTERACTION WITH GIP1 AND GIP2</scope>
</reference>
<evidence type="ECO:0000250" key="1">
    <source>
        <dbReference type="UniProtKB" id="Q9BSJ2"/>
    </source>
</evidence>
<evidence type="ECO:0000269" key="2">
    <source>
    </source>
</evidence>
<evidence type="ECO:0000269" key="3">
    <source>
    </source>
</evidence>
<evidence type="ECO:0000269" key="4">
    <source>
    </source>
</evidence>
<evidence type="ECO:0000269" key="5">
    <source>
    </source>
</evidence>
<evidence type="ECO:0000269" key="6">
    <source>
    </source>
</evidence>
<evidence type="ECO:0000269" key="7">
    <source>
    </source>
</evidence>
<evidence type="ECO:0000305" key="8"/>
<proteinExistence type="evidence at protein level"/>